<evidence type="ECO:0000255" key="1">
    <source>
        <dbReference type="HAMAP-Rule" id="MF_01341"/>
    </source>
</evidence>
<evidence type="ECO:0000256" key="2">
    <source>
        <dbReference type="SAM" id="MobiDB-lite"/>
    </source>
</evidence>
<evidence type="ECO:0000305" key="3"/>
<reference key="1">
    <citation type="journal article" date="2001" name="J. Bacteriol.">
        <title>Genome sequence and comparative analysis of the solvent-producing bacterium Clostridium acetobutylicum.</title>
        <authorList>
            <person name="Noelling J."/>
            <person name="Breton G."/>
            <person name="Omelchenko M.V."/>
            <person name="Makarova K.S."/>
            <person name="Zeng Q."/>
            <person name="Gibson R."/>
            <person name="Lee H.M."/>
            <person name="Dubois J."/>
            <person name="Qiu D."/>
            <person name="Hitti J."/>
            <person name="Wolf Y.I."/>
            <person name="Tatusov R.L."/>
            <person name="Sabathe F."/>
            <person name="Doucette-Stamm L.A."/>
            <person name="Soucaille P."/>
            <person name="Daly M.J."/>
            <person name="Bennett G.N."/>
            <person name="Koonin E.V."/>
            <person name="Smith D.R."/>
        </authorList>
    </citation>
    <scope>NUCLEOTIDE SEQUENCE [LARGE SCALE GENOMIC DNA]</scope>
    <source>
        <strain>ATCC 824 / DSM 792 / JCM 1419 / IAM 19013 / LMG 5710 / NBRC 13948 / NRRL B-527 / VKM B-1787 / 2291 / W</strain>
    </source>
</reference>
<comment type="function">
    <text evidence="1">Binds to the 23S rRNA.</text>
</comment>
<comment type="subunit">
    <text evidence="1">Part of the 50S ribosomal subunit.</text>
</comment>
<comment type="similarity">
    <text evidence="1">Belongs to the universal ribosomal protein uL15 family.</text>
</comment>
<name>RL15_CLOAB</name>
<dbReference type="EMBL" id="AE001437">
    <property type="protein sequence ID" value="AAK81053.1"/>
    <property type="molecule type" value="Genomic_DNA"/>
</dbReference>
<dbReference type="PIR" id="B97283">
    <property type="entry name" value="B97283"/>
</dbReference>
<dbReference type="RefSeq" id="NP_349713.1">
    <property type="nucleotide sequence ID" value="NC_003030.1"/>
</dbReference>
<dbReference type="RefSeq" id="WP_010966393.1">
    <property type="nucleotide sequence ID" value="NC_003030.1"/>
</dbReference>
<dbReference type="SMR" id="Q97EJ7"/>
<dbReference type="STRING" id="272562.CA_C3114"/>
<dbReference type="GeneID" id="44999601"/>
<dbReference type="KEGG" id="cac:CA_C3114"/>
<dbReference type="PATRIC" id="fig|272562.8.peg.3297"/>
<dbReference type="eggNOG" id="COG0200">
    <property type="taxonomic scope" value="Bacteria"/>
</dbReference>
<dbReference type="HOGENOM" id="CLU_055188_4_2_9"/>
<dbReference type="OrthoDB" id="9810293at2"/>
<dbReference type="Proteomes" id="UP000000814">
    <property type="component" value="Chromosome"/>
</dbReference>
<dbReference type="GO" id="GO:0022625">
    <property type="term" value="C:cytosolic large ribosomal subunit"/>
    <property type="evidence" value="ECO:0007669"/>
    <property type="project" value="TreeGrafter"/>
</dbReference>
<dbReference type="GO" id="GO:0019843">
    <property type="term" value="F:rRNA binding"/>
    <property type="evidence" value="ECO:0007669"/>
    <property type="project" value="UniProtKB-UniRule"/>
</dbReference>
<dbReference type="GO" id="GO:0003735">
    <property type="term" value="F:structural constituent of ribosome"/>
    <property type="evidence" value="ECO:0007669"/>
    <property type="project" value="InterPro"/>
</dbReference>
<dbReference type="GO" id="GO:0006412">
    <property type="term" value="P:translation"/>
    <property type="evidence" value="ECO:0007669"/>
    <property type="project" value="UniProtKB-UniRule"/>
</dbReference>
<dbReference type="Gene3D" id="3.100.10.10">
    <property type="match status" value="1"/>
</dbReference>
<dbReference type="HAMAP" id="MF_01341">
    <property type="entry name" value="Ribosomal_uL15"/>
    <property type="match status" value="1"/>
</dbReference>
<dbReference type="InterPro" id="IPR030878">
    <property type="entry name" value="Ribosomal_uL15"/>
</dbReference>
<dbReference type="InterPro" id="IPR021131">
    <property type="entry name" value="Ribosomal_uL15/eL18"/>
</dbReference>
<dbReference type="InterPro" id="IPR036227">
    <property type="entry name" value="Ribosomal_uL15/eL18_sf"/>
</dbReference>
<dbReference type="InterPro" id="IPR005749">
    <property type="entry name" value="Ribosomal_uL15_bac-type"/>
</dbReference>
<dbReference type="NCBIfam" id="TIGR01071">
    <property type="entry name" value="rplO_bact"/>
    <property type="match status" value="1"/>
</dbReference>
<dbReference type="PANTHER" id="PTHR12934">
    <property type="entry name" value="50S RIBOSOMAL PROTEIN L15"/>
    <property type="match status" value="1"/>
</dbReference>
<dbReference type="PANTHER" id="PTHR12934:SF11">
    <property type="entry name" value="LARGE RIBOSOMAL SUBUNIT PROTEIN UL15M"/>
    <property type="match status" value="1"/>
</dbReference>
<dbReference type="Pfam" id="PF00828">
    <property type="entry name" value="Ribosomal_L27A"/>
    <property type="match status" value="1"/>
</dbReference>
<dbReference type="SUPFAM" id="SSF52080">
    <property type="entry name" value="Ribosomal proteins L15p and L18e"/>
    <property type="match status" value="1"/>
</dbReference>
<keyword id="KW-1185">Reference proteome</keyword>
<keyword id="KW-0687">Ribonucleoprotein</keyword>
<keyword id="KW-0689">Ribosomal protein</keyword>
<keyword id="KW-0694">RNA-binding</keyword>
<keyword id="KW-0699">rRNA-binding</keyword>
<feature type="chain" id="PRO_0000104705" description="Large ribosomal subunit protein uL15">
    <location>
        <begin position="1"/>
        <end position="146"/>
    </location>
</feature>
<feature type="region of interest" description="Disordered" evidence="2">
    <location>
        <begin position="1"/>
        <end position="54"/>
    </location>
</feature>
<feature type="compositionally biased region" description="Gly residues" evidence="2">
    <location>
        <begin position="21"/>
        <end position="31"/>
    </location>
</feature>
<feature type="compositionally biased region" description="Gly residues" evidence="2">
    <location>
        <begin position="42"/>
        <end position="52"/>
    </location>
</feature>
<gene>
    <name evidence="1" type="primary">rplO</name>
    <name type="ordered locus">CA_C3114</name>
</gene>
<accession>Q97EJ7</accession>
<sequence>MKLHELKPAAGSRKAPKRVGRGTGSGLGRNAGKGEKGQNARSGGGVRPGFEGGQMPLYRRLPKRGFTNIFAKTITAVNVDRLNIFEDGTEVTIDALIEKGIIKKVNDGVKILGNGELKKKLVVKVNKYSKSAAEKIEAAGGKAEVI</sequence>
<organism>
    <name type="scientific">Clostridium acetobutylicum (strain ATCC 824 / DSM 792 / JCM 1419 / IAM 19013 / LMG 5710 / NBRC 13948 / NRRL B-527 / VKM B-1787 / 2291 / W)</name>
    <dbReference type="NCBI Taxonomy" id="272562"/>
    <lineage>
        <taxon>Bacteria</taxon>
        <taxon>Bacillati</taxon>
        <taxon>Bacillota</taxon>
        <taxon>Clostridia</taxon>
        <taxon>Eubacteriales</taxon>
        <taxon>Clostridiaceae</taxon>
        <taxon>Clostridium</taxon>
    </lineage>
</organism>
<proteinExistence type="inferred from homology"/>
<protein>
    <recommendedName>
        <fullName evidence="1">Large ribosomal subunit protein uL15</fullName>
    </recommendedName>
    <alternativeName>
        <fullName evidence="3">50S ribosomal protein L15</fullName>
    </alternativeName>
</protein>